<evidence type="ECO:0000250" key="1"/>
<evidence type="ECO:0000255" key="2">
    <source>
        <dbReference type="PROSITE-ProRule" id="PRU00434"/>
    </source>
</evidence>
<evidence type="ECO:0000305" key="3"/>
<keyword id="KW-0067">ATP-binding</keyword>
<keyword id="KW-1003">Cell membrane</keyword>
<keyword id="KW-0472">Membrane</keyword>
<keyword id="KW-0547">Nucleotide-binding</keyword>
<keyword id="KW-1185">Reference proteome</keyword>
<keyword id="KW-1278">Translocase</keyword>
<keyword id="KW-0813">Transport</keyword>
<feature type="chain" id="PRO_0000092119" description="Putative ABC transporter ATP-binding protein TTE0246">
    <location>
        <begin position="1"/>
        <end position="242"/>
    </location>
</feature>
<feature type="domain" description="ABC transporter" evidence="2">
    <location>
        <begin position="5"/>
        <end position="242"/>
    </location>
</feature>
<feature type="binding site" evidence="2">
    <location>
        <begin position="38"/>
        <end position="45"/>
    </location>
    <ligand>
        <name>ATP</name>
        <dbReference type="ChEBI" id="CHEBI:30616"/>
    </ligand>
</feature>
<comment type="function">
    <text evidence="1">Probably part of an ABC transporter complex. Responsible for energy coupling to the transport system (By similarity).</text>
</comment>
<comment type="subcellular location">
    <subcellularLocation>
        <location evidence="1">Cell membrane</location>
        <topology evidence="1">Peripheral membrane protein</topology>
    </subcellularLocation>
</comment>
<comment type="similarity">
    <text evidence="3">Belongs to the ABC transporter superfamily.</text>
</comment>
<organism>
    <name type="scientific">Caldanaerobacter subterraneus subsp. tengcongensis (strain DSM 15242 / JCM 11007 / NBRC 100824 / MB4)</name>
    <name type="common">Thermoanaerobacter tengcongensis</name>
    <dbReference type="NCBI Taxonomy" id="273068"/>
    <lineage>
        <taxon>Bacteria</taxon>
        <taxon>Bacillati</taxon>
        <taxon>Bacillota</taxon>
        <taxon>Clostridia</taxon>
        <taxon>Thermoanaerobacterales</taxon>
        <taxon>Thermoanaerobacteraceae</taxon>
        <taxon>Caldanaerobacter</taxon>
    </lineage>
</organism>
<name>Y246_CALS4</name>
<gene>
    <name type="ordered locus">TTE0246</name>
</gene>
<sequence length="242" mass="27544">MDKVFELKNVSYFYTPKVPALIDISFDVKLKEKLFILGANGSGKSTLLKLMDGLIYPHEGQIRFFGKVIGDKRTFDEYEFRRRVGFVFQDSDVQLFNTTVFDEIAFAPLQMGVKKEEVEKLVNEILISFGIEKLKDRPPHRLSGGEKKKVALASIIVINPDVLLLDEPTNGLDPRSKKWLLSKLEELNQKGATLVIATHDLEMAKKFSDRIIILNEEHKIETIGSPEEILNDEKLLLKANLI</sequence>
<accession>Q8RD07</accession>
<protein>
    <recommendedName>
        <fullName>Putative ABC transporter ATP-binding protein TTE0246</fullName>
        <ecNumber>7.-.-.-</ecNumber>
    </recommendedName>
</protein>
<reference key="1">
    <citation type="journal article" date="2002" name="Genome Res.">
        <title>A complete sequence of the T. tengcongensis genome.</title>
        <authorList>
            <person name="Bao Q."/>
            <person name="Tian Y."/>
            <person name="Li W."/>
            <person name="Xu Z."/>
            <person name="Xuan Z."/>
            <person name="Hu S."/>
            <person name="Dong W."/>
            <person name="Yang J."/>
            <person name="Chen Y."/>
            <person name="Xue Y."/>
            <person name="Xu Y."/>
            <person name="Lai X."/>
            <person name="Huang L."/>
            <person name="Dong X."/>
            <person name="Ma Y."/>
            <person name="Ling L."/>
            <person name="Tan H."/>
            <person name="Chen R."/>
            <person name="Wang J."/>
            <person name="Yu J."/>
            <person name="Yang H."/>
        </authorList>
    </citation>
    <scope>NUCLEOTIDE SEQUENCE [LARGE SCALE GENOMIC DNA]</scope>
    <source>
        <strain>DSM 15242 / JCM 11007 / NBRC 100824 / MB4</strain>
    </source>
</reference>
<dbReference type="EC" id="7.-.-.-"/>
<dbReference type="EMBL" id="AE008691">
    <property type="protein sequence ID" value="AAM23542.1"/>
    <property type="molecule type" value="Genomic_DNA"/>
</dbReference>
<dbReference type="RefSeq" id="WP_011024722.1">
    <property type="nucleotide sequence ID" value="NC_003869.1"/>
</dbReference>
<dbReference type="SMR" id="Q8RD07"/>
<dbReference type="STRING" id="273068.TTE0246"/>
<dbReference type="TCDB" id="3.A.1.23.5">
    <property type="family name" value="the atp-binding cassette (abc) superfamily"/>
</dbReference>
<dbReference type="KEGG" id="tte:TTE0246"/>
<dbReference type="eggNOG" id="COG1122">
    <property type="taxonomic scope" value="Bacteria"/>
</dbReference>
<dbReference type="HOGENOM" id="CLU_000604_1_22_9"/>
<dbReference type="OrthoDB" id="9814634at2"/>
<dbReference type="Proteomes" id="UP000000555">
    <property type="component" value="Chromosome"/>
</dbReference>
<dbReference type="GO" id="GO:0043190">
    <property type="term" value="C:ATP-binding cassette (ABC) transporter complex"/>
    <property type="evidence" value="ECO:0007669"/>
    <property type="project" value="TreeGrafter"/>
</dbReference>
<dbReference type="GO" id="GO:0005524">
    <property type="term" value="F:ATP binding"/>
    <property type="evidence" value="ECO:0007669"/>
    <property type="project" value="UniProtKB-KW"/>
</dbReference>
<dbReference type="GO" id="GO:0016887">
    <property type="term" value="F:ATP hydrolysis activity"/>
    <property type="evidence" value="ECO:0007669"/>
    <property type="project" value="InterPro"/>
</dbReference>
<dbReference type="GO" id="GO:0042626">
    <property type="term" value="F:ATPase-coupled transmembrane transporter activity"/>
    <property type="evidence" value="ECO:0007669"/>
    <property type="project" value="TreeGrafter"/>
</dbReference>
<dbReference type="CDD" id="cd03225">
    <property type="entry name" value="ABC_cobalt_CbiO_domain1"/>
    <property type="match status" value="1"/>
</dbReference>
<dbReference type="FunFam" id="3.40.50.300:FF:000224">
    <property type="entry name" value="Energy-coupling factor transporter ATP-binding protein EcfA"/>
    <property type="match status" value="1"/>
</dbReference>
<dbReference type="Gene3D" id="3.40.50.300">
    <property type="entry name" value="P-loop containing nucleotide triphosphate hydrolases"/>
    <property type="match status" value="1"/>
</dbReference>
<dbReference type="InterPro" id="IPR003593">
    <property type="entry name" value="AAA+_ATPase"/>
</dbReference>
<dbReference type="InterPro" id="IPR003439">
    <property type="entry name" value="ABC_transporter-like_ATP-bd"/>
</dbReference>
<dbReference type="InterPro" id="IPR017871">
    <property type="entry name" value="ABC_transporter-like_CS"/>
</dbReference>
<dbReference type="InterPro" id="IPR015856">
    <property type="entry name" value="ABC_transpr_CbiO/EcfA_su"/>
</dbReference>
<dbReference type="InterPro" id="IPR050095">
    <property type="entry name" value="ECF_ABC_transporter_ATP-bd"/>
</dbReference>
<dbReference type="InterPro" id="IPR027417">
    <property type="entry name" value="P-loop_NTPase"/>
</dbReference>
<dbReference type="PANTHER" id="PTHR43553:SF27">
    <property type="entry name" value="ENERGY-COUPLING FACTOR TRANSPORTER ATP-BINDING PROTEIN ECFA2"/>
    <property type="match status" value="1"/>
</dbReference>
<dbReference type="PANTHER" id="PTHR43553">
    <property type="entry name" value="HEAVY METAL TRANSPORTER"/>
    <property type="match status" value="1"/>
</dbReference>
<dbReference type="Pfam" id="PF00005">
    <property type="entry name" value="ABC_tran"/>
    <property type="match status" value="1"/>
</dbReference>
<dbReference type="SMART" id="SM00382">
    <property type="entry name" value="AAA"/>
    <property type="match status" value="1"/>
</dbReference>
<dbReference type="SUPFAM" id="SSF52540">
    <property type="entry name" value="P-loop containing nucleoside triphosphate hydrolases"/>
    <property type="match status" value="1"/>
</dbReference>
<dbReference type="PROSITE" id="PS00211">
    <property type="entry name" value="ABC_TRANSPORTER_1"/>
    <property type="match status" value="1"/>
</dbReference>
<dbReference type="PROSITE" id="PS50893">
    <property type="entry name" value="ABC_TRANSPORTER_2"/>
    <property type="match status" value="1"/>
</dbReference>
<proteinExistence type="inferred from homology"/>